<gene>
    <name evidence="10" type="primary">PHO88</name>
    <name evidence="9" type="synonym">SND3</name>
    <name evidence="13" type="ordered locus">YBR106W</name>
    <name type="ORF">YBR0835</name>
</gene>
<keyword id="KW-0256">Endoplasmic reticulum</keyword>
<keyword id="KW-0472">Membrane</keyword>
<keyword id="KW-0496">Mitochondrion</keyword>
<keyword id="KW-0592">Phosphate transport</keyword>
<keyword id="KW-0597">Phosphoprotein</keyword>
<keyword id="KW-0653">Protein transport</keyword>
<keyword id="KW-1185">Reference proteome</keyword>
<keyword id="KW-0812">Transmembrane</keyword>
<keyword id="KW-1133">Transmembrane helix</keyword>
<keyword id="KW-0813">Transport</keyword>
<reference key="1">
    <citation type="journal article" date="1994" name="Yeast">
        <title>Analysis of a 70 kb region on the right arm of yeast chromosome II.</title>
        <authorList>
            <person name="Mannhaupt G."/>
            <person name="Stucka R."/>
            <person name="Ehnle S."/>
            <person name="Vetter I."/>
            <person name="Feldmann H."/>
        </authorList>
    </citation>
    <scope>NUCLEOTIDE SEQUENCE [GENOMIC DNA]</scope>
    <source>
        <strain>ATCC 204508 / S288c</strain>
    </source>
</reference>
<reference key="2">
    <citation type="journal article" date="1994" name="EMBO J.">
        <title>Complete DNA sequence of yeast chromosome II.</title>
        <authorList>
            <person name="Feldmann H."/>
            <person name="Aigle M."/>
            <person name="Aljinovic G."/>
            <person name="Andre B."/>
            <person name="Baclet M.C."/>
            <person name="Barthe C."/>
            <person name="Baur A."/>
            <person name="Becam A.-M."/>
            <person name="Biteau N."/>
            <person name="Boles E."/>
            <person name="Brandt T."/>
            <person name="Brendel M."/>
            <person name="Brueckner M."/>
            <person name="Bussereau F."/>
            <person name="Christiansen C."/>
            <person name="Contreras R."/>
            <person name="Crouzet M."/>
            <person name="Cziepluch C."/>
            <person name="Demolis N."/>
            <person name="Delaveau T."/>
            <person name="Doignon F."/>
            <person name="Domdey H."/>
            <person name="Duesterhus S."/>
            <person name="Dubois E."/>
            <person name="Dujon B."/>
            <person name="El Bakkoury M."/>
            <person name="Entian K.-D."/>
            <person name="Feuermann M."/>
            <person name="Fiers W."/>
            <person name="Fobo G.M."/>
            <person name="Fritz C."/>
            <person name="Gassenhuber J."/>
            <person name="Glansdorff N."/>
            <person name="Goffeau A."/>
            <person name="Grivell L.A."/>
            <person name="de Haan M."/>
            <person name="Hein C."/>
            <person name="Herbert C.J."/>
            <person name="Hollenberg C.P."/>
            <person name="Holmstroem K."/>
            <person name="Jacq C."/>
            <person name="Jacquet M."/>
            <person name="Jauniaux J.-C."/>
            <person name="Jonniaux J.-L."/>
            <person name="Kallesoee T."/>
            <person name="Kiesau P."/>
            <person name="Kirchrath L."/>
            <person name="Koetter P."/>
            <person name="Korol S."/>
            <person name="Liebl S."/>
            <person name="Logghe M."/>
            <person name="Lohan A.J.E."/>
            <person name="Louis E.J."/>
            <person name="Li Z.Y."/>
            <person name="Maat M.J."/>
            <person name="Mallet L."/>
            <person name="Mannhaupt G."/>
            <person name="Messenguy F."/>
            <person name="Miosga T."/>
            <person name="Molemans F."/>
            <person name="Mueller S."/>
            <person name="Nasr F."/>
            <person name="Obermaier B."/>
            <person name="Perea J."/>
            <person name="Pierard A."/>
            <person name="Piravandi E."/>
            <person name="Pohl F.M."/>
            <person name="Pohl T.M."/>
            <person name="Potier S."/>
            <person name="Proft M."/>
            <person name="Purnelle B."/>
            <person name="Ramezani Rad M."/>
            <person name="Rieger M."/>
            <person name="Rose M."/>
            <person name="Schaaff-Gerstenschlaeger I."/>
            <person name="Scherens B."/>
            <person name="Schwarzlose C."/>
            <person name="Skala J."/>
            <person name="Slonimski P.P."/>
            <person name="Smits P.H.M."/>
            <person name="Souciet J.-L."/>
            <person name="Steensma H.Y."/>
            <person name="Stucka R."/>
            <person name="Urrestarazu L.A."/>
            <person name="van der Aart Q.J.M."/>
            <person name="Van Dyck L."/>
            <person name="Vassarotti A."/>
            <person name="Vetter I."/>
            <person name="Vierendeels F."/>
            <person name="Vissers S."/>
            <person name="Wagner G."/>
            <person name="de Wergifosse P."/>
            <person name="Wolfe K.H."/>
            <person name="Zagulski M."/>
            <person name="Zimmermann F.K."/>
            <person name="Mewes H.-W."/>
            <person name="Kleine K."/>
        </authorList>
    </citation>
    <scope>NUCLEOTIDE SEQUENCE [LARGE SCALE GENOMIC DNA]</scope>
    <source>
        <strain>ATCC 204508 / S288c</strain>
    </source>
</reference>
<reference key="3">
    <citation type="journal article" date="2014" name="G3 (Bethesda)">
        <title>The reference genome sequence of Saccharomyces cerevisiae: Then and now.</title>
        <authorList>
            <person name="Engel S.R."/>
            <person name="Dietrich F.S."/>
            <person name="Fisk D.G."/>
            <person name="Binkley G."/>
            <person name="Balakrishnan R."/>
            <person name="Costanzo M.C."/>
            <person name="Dwight S.S."/>
            <person name="Hitz B.C."/>
            <person name="Karra K."/>
            <person name="Nash R.S."/>
            <person name="Weng S."/>
            <person name="Wong E.D."/>
            <person name="Lloyd P."/>
            <person name="Skrzypek M.S."/>
            <person name="Miyasato S.R."/>
            <person name="Simison M."/>
            <person name="Cherry J.M."/>
        </authorList>
    </citation>
    <scope>GENOME REANNOTATION</scope>
    <source>
        <strain>ATCC 204508 / S288c</strain>
    </source>
</reference>
<reference key="4">
    <citation type="journal article" date="2007" name="Genome Res.">
        <title>Approaching a complete repository of sequence-verified protein-encoding clones for Saccharomyces cerevisiae.</title>
        <authorList>
            <person name="Hu Y."/>
            <person name="Rolfs A."/>
            <person name="Bhullar B."/>
            <person name="Murthy T.V.S."/>
            <person name="Zhu C."/>
            <person name="Berger M.F."/>
            <person name="Camargo A.A."/>
            <person name="Kelley F."/>
            <person name="McCarron S."/>
            <person name="Jepson D."/>
            <person name="Richardson A."/>
            <person name="Raphael J."/>
            <person name="Moreira D."/>
            <person name="Taycher E."/>
            <person name="Zuo D."/>
            <person name="Mohr S."/>
            <person name="Kane M.F."/>
            <person name="Williamson J."/>
            <person name="Simpson A.J.G."/>
            <person name="Bulyk M.L."/>
            <person name="Harlow E."/>
            <person name="Marsischky G."/>
            <person name="Kolodner R.D."/>
            <person name="LaBaer J."/>
        </authorList>
    </citation>
    <scope>NUCLEOTIDE SEQUENCE [GENOMIC DNA]</scope>
    <source>
        <strain>ATCC 204508 / S288c</strain>
    </source>
</reference>
<reference key="5">
    <citation type="journal article" date="1996" name="Mol. Gen. Genet.">
        <title>A putative membrane protein, Pho88p, involved in inorganic phosphate transport in Saccharomyces cerevisiae.</title>
        <authorList>
            <person name="Yompakdee C."/>
            <person name="Ogawa N."/>
            <person name="Harashima S."/>
            <person name="Oshima Y."/>
        </authorList>
    </citation>
    <scope>FUNCTION</scope>
    <scope>SUBCELLULAR LOCATION</scope>
</reference>
<reference key="6">
    <citation type="journal article" date="2003" name="Nature">
        <title>Global analysis of protein localization in budding yeast.</title>
        <authorList>
            <person name="Huh W.-K."/>
            <person name="Falvo J.V."/>
            <person name="Gerke L.C."/>
            <person name="Carroll A.S."/>
            <person name="Howson R.W."/>
            <person name="Weissman J.S."/>
            <person name="O'Shea E.K."/>
        </authorList>
    </citation>
    <scope>SUBCELLULAR LOCATION [LARGE SCALE ANALYSIS]</scope>
</reference>
<reference key="7">
    <citation type="journal article" date="2003" name="Nature">
        <title>Global analysis of protein expression in yeast.</title>
        <authorList>
            <person name="Ghaemmaghami S."/>
            <person name="Huh W.-K."/>
            <person name="Bower K."/>
            <person name="Howson R.W."/>
            <person name="Belle A."/>
            <person name="Dephoure N."/>
            <person name="O'Shea E.K."/>
            <person name="Weissman J.S."/>
        </authorList>
    </citation>
    <scope>LEVEL OF PROTEIN EXPRESSION [LARGE SCALE ANALYSIS]</scope>
</reference>
<reference key="8">
    <citation type="journal article" date="2003" name="Proc. Natl. Acad. Sci. U.S.A.">
        <title>The proteome of Saccharomyces cerevisiae mitochondria.</title>
        <authorList>
            <person name="Sickmann A."/>
            <person name="Reinders J."/>
            <person name="Wagner Y."/>
            <person name="Joppich C."/>
            <person name="Zahedi R.P."/>
            <person name="Meyer H.E."/>
            <person name="Schoenfisch B."/>
            <person name="Perschil I."/>
            <person name="Chacinska A."/>
            <person name="Guiard B."/>
            <person name="Rehling P."/>
            <person name="Pfanner N."/>
            <person name="Meisinger C."/>
        </authorList>
    </citation>
    <scope>SUBCELLULAR LOCATION [LARGE SCALE ANALYSIS]</scope>
    <source>
        <strain>ATCC 76625 / YPH499</strain>
    </source>
</reference>
<reference key="9">
    <citation type="journal article" date="2006" name="PLoS Genet.">
        <title>Telomere length as a quantitative trait: genome-wide survey and genetic mapping of telomere length-control genes in yeast.</title>
        <authorList>
            <person name="Gatbonton T."/>
            <person name="Imbesi M."/>
            <person name="Nelson M."/>
            <person name="Akey J.M."/>
            <person name="Ruderfer D.M."/>
            <person name="Kruglyak L."/>
            <person name="Simon J.A."/>
            <person name="Bedalov A."/>
        </authorList>
    </citation>
    <scope>FUNCTION</scope>
</reference>
<reference key="10">
    <citation type="journal article" date="2008" name="Mol. Cell. Proteomics">
        <title>A multidimensional chromatography technology for in-depth phosphoproteome analysis.</title>
        <authorList>
            <person name="Albuquerque C.P."/>
            <person name="Smolka M.B."/>
            <person name="Payne S.H."/>
            <person name="Bafna V."/>
            <person name="Eng J."/>
            <person name="Zhou H."/>
        </authorList>
    </citation>
    <scope>PHOSPHORYLATION [LARGE SCALE ANALYSIS] AT SER-157</scope>
    <scope>IDENTIFICATION BY MASS SPECTROMETRY [LARGE SCALE ANALYSIS]</scope>
</reference>
<reference key="11">
    <citation type="journal article" date="2016" name="Nature">
        <title>The SND proteins constitute an alternative targeting route to the endoplasmic reticulum.</title>
        <authorList>
            <person name="Aviram N."/>
            <person name="Ast T."/>
            <person name="Costa E.A."/>
            <person name="Arakel E.C."/>
            <person name="Chuartzman S.G."/>
            <person name="Jan C.H."/>
            <person name="Hassdenteufel S."/>
            <person name="Dudek J."/>
            <person name="Jung M."/>
            <person name="Schorr S."/>
            <person name="Zimmermann R."/>
            <person name="Schwappach B."/>
            <person name="Weissman J.S."/>
            <person name="Schuldiner M."/>
        </authorList>
    </citation>
    <scope>FUNCTION</scope>
    <scope>SUBCELLULAR LOCATION</scope>
    <scope>INTERACTION WITH ENV10</scope>
</reference>
<proteinExistence type="evidence at protein level"/>
<evidence type="ECO:0000255" key="1"/>
<evidence type="ECO:0000256" key="2">
    <source>
        <dbReference type="SAM" id="MobiDB-lite"/>
    </source>
</evidence>
<evidence type="ECO:0000269" key="3">
    <source>
    </source>
</evidence>
<evidence type="ECO:0000269" key="4">
    <source>
    </source>
</evidence>
<evidence type="ECO:0000269" key="5">
    <source>
    </source>
</evidence>
<evidence type="ECO:0000269" key="6">
    <source>
    </source>
</evidence>
<evidence type="ECO:0000269" key="7">
    <source>
    </source>
</evidence>
<evidence type="ECO:0000269" key="8">
    <source>
    </source>
</evidence>
<evidence type="ECO:0000303" key="9">
    <source>
    </source>
</evidence>
<evidence type="ECO:0000303" key="10">
    <source>
    </source>
</evidence>
<evidence type="ECO:0000305" key="11"/>
<evidence type="ECO:0000305" key="12">
    <source>
    </source>
</evidence>
<evidence type="ECO:0000312" key="13">
    <source>
        <dbReference type="SGD" id="S000000310"/>
    </source>
</evidence>
<evidence type="ECO:0007744" key="14">
    <source>
    </source>
</evidence>
<dbReference type="EMBL" id="X78993">
    <property type="protein sequence ID" value="CAA55609.1"/>
    <property type="molecule type" value="Genomic_DNA"/>
</dbReference>
<dbReference type="EMBL" id="Z35975">
    <property type="protein sequence ID" value="CAA85061.1"/>
    <property type="molecule type" value="Genomic_DNA"/>
</dbReference>
<dbReference type="EMBL" id="AY558180">
    <property type="protein sequence ID" value="AAS56506.1"/>
    <property type="molecule type" value="Genomic_DNA"/>
</dbReference>
<dbReference type="EMBL" id="BK006936">
    <property type="protein sequence ID" value="DAA07225.1"/>
    <property type="molecule type" value="Genomic_DNA"/>
</dbReference>
<dbReference type="PIR" id="S48271">
    <property type="entry name" value="S48271"/>
</dbReference>
<dbReference type="RefSeq" id="NP_009664.1">
    <property type="nucleotide sequence ID" value="NM_001178454.1"/>
</dbReference>
<dbReference type="SMR" id="P38264"/>
<dbReference type="BioGRID" id="32810">
    <property type="interactions" value="393"/>
</dbReference>
<dbReference type="DIP" id="DIP-4888N"/>
<dbReference type="FunCoup" id="P38264">
    <property type="interactions" value="306"/>
</dbReference>
<dbReference type="IntAct" id="P38264">
    <property type="interactions" value="147"/>
</dbReference>
<dbReference type="MINT" id="P38264"/>
<dbReference type="STRING" id="4932.YBR106W"/>
<dbReference type="TCDB" id="9.A.64.1.1">
    <property type="family name" value="the srp-independent targeting (snd) family"/>
</dbReference>
<dbReference type="iPTMnet" id="P38264"/>
<dbReference type="PaxDb" id="4932-YBR106W"/>
<dbReference type="PeptideAtlas" id="P38264"/>
<dbReference type="EnsemblFungi" id="YBR106W_mRNA">
    <property type="protein sequence ID" value="YBR106W"/>
    <property type="gene ID" value="YBR106W"/>
</dbReference>
<dbReference type="GeneID" id="852403"/>
<dbReference type="KEGG" id="sce:YBR106W"/>
<dbReference type="AGR" id="SGD:S000000310"/>
<dbReference type="SGD" id="S000000310">
    <property type="gene designation" value="PHO88"/>
</dbReference>
<dbReference type="VEuPathDB" id="FungiDB:YBR106W"/>
<dbReference type="eggNOG" id="KOG4554">
    <property type="taxonomic scope" value="Eukaryota"/>
</dbReference>
<dbReference type="HOGENOM" id="CLU_099163_0_0_1"/>
<dbReference type="InParanoid" id="P38264"/>
<dbReference type="OMA" id="NMDYDKG"/>
<dbReference type="OrthoDB" id="18139at2759"/>
<dbReference type="BioCyc" id="YEAST:G3O-29068-MONOMER"/>
<dbReference type="BioGRID-ORCS" id="852403">
    <property type="hits" value="0 hits in 10 CRISPR screens"/>
</dbReference>
<dbReference type="PRO" id="PR:P38264"/>
<dbReference type="Proteomes" id="UP000002311">
    <property type="component" value="Chromosome II"/>
</dbReference>
<dbReference type="RNAct" id="P38264">
    <property type="molecule type" value="protein"/>
</dbReference>
<dbReference type="GO" id="GO:0005783">
    <property type="term" value="C:endoplasmic reticulum"/>
    <property type="evidence" value="ECO:0000314"/>
    <property type="project" value="SGD"/>
</dbReference>
<dbReference type="GO" id="GO:0005789">
    <property type="term" value="C:endoplasmic reticulum membrane"/>
    <property type="evidence" value="ECO:0007669"/>
    <property type="project" value="UniProtKB-SubCell"/>
</dbReference>
<dbReference type="GO" id="GO:0016020">
    <property type="term" value="C:membrane"/>
    <property type="evidence" value="ECO:0000314"/>
    <property type="project" value="SGD"/>
</dbReference>
<dbReference type="GO" id="GO:0005739">
    <property type="term" value="C:mitochondrion"/>
    <property type="evidence" value="ECO:0007005"/>
    <property type="project" value="SGD"/>
</dbReference>
<dbReference type="GO" id="GO:0006817">
    <property type="term" value="P:phosphate ion transport"/>
    <property type="evidence" value="ECO:0007669"/>
    <property type="project" value="UniProtKB-KW"/>
</dbReference>
<dbReference type="GO" id="GO:0051604">
    <property type="term" value="P:protein maturation"/>
    <property type="evidence" value="ECO:0000315"/>
    <property type="project" value="SGD"/>
</dbReference>
<dbReference type="GO" id="GO:0045047">
    <property type="term" value="P:protein targeting to ER"/>
    <property type="evidence" value="ECO:0000315"/>
    <property type="project" value="SGD"/>
</dbReference>
<dbReference type="GO" id="GO:0015031">
    <property type="term" value="P:protein transport"/>
    <property type="evidence" value="ECO:0007669"/>
    <property type="project" value="UniProtKB-KW"/>
</dbReference>
<dbReference type="InterPro" id="IPR012098">
    <property type="entry name" value="SND3_fun"/>
</dbReference>
<dbReference type="PANTHER" id="PTHR28112">
    <property type="entry name" value="SRP-INDEPENDENT TARGETING PROTEIN 3"/>
    <property type="match status" value="1"/>
</dbReference>
<dbReference type="PANTHER" id="PTHR28112:SF1">
    <property type="entry name" value="SRP-INDEPENDENT TARGETING PROTEIN 3"/>
    <property type="match status" value="1"/>
</dbReference>
<dbReference type="Pfam" id="PF10032">
    <property type="entry name" value="Pho88"/>
    <property type="match status" value="1"/>
</dbReference>
<dbReference type="PIRSF" id="PIRSF008756">
    <property type="entry name" value="P_tr_PHO88"/>
    <property type="match status" value="1"/>
</dbReference>
<comment type="function">
    <text evidence="6 7 8">Functions in the SND pathway, a SRP (signal recognition particle) and GET (guided entry of tail-anchored proteins) independent pathway for targeting a broad range of substrate proteins to the endoplasmic reticulum. SND functions in parallel to GET in targeting proteins with downstream hydrophobic motifs (PubMed:27905431). Involved in inorganic phosphate uptake (PubMed:8709965). Also involved in telomere length regulation and maintenance (PubMed:16552446).</text>
</comment>
<comment type="subunit">
    <text evidence="7">Interacts with ENV10/SND2. ENV10/SND2 and PHO88/SND3 form a complex with the translocon in the endoplasmic reticulum membrane.</text>
</comment>
<comment type="interaction">
    <interactant intactId="EBI-13350">
        <id>P38264</id>
    </interactant>
    <interactant intactId="EBI-2047850">
        <id>P17064</id>
        <label>FCY2</label>
    </interactant>
    <organismsDiffer>false</organismsDiffer>
    <experiments>3</experiments>
</comment>
<comment type="interaction">
    <interactant intactId="EBI-13350">
        <id>P38264</id>
    </interactant>
    <interactant intactId="EBI-17099">
        <id>Q02774</id>
        <label>SHR3</label>
    </interactant>
    <organismsDiffer>false</organismsDiffer>
    <experiments>3</experiments>
</comment>
<comment type="interaction">
    <interactant intactId="EBI-13350">
        <id>P38264</id>
    </interactant>
    <interactant intactId="EBI-18175">
        <id>P38353</id>
        <label>SSH1</label>
    </interactant>
    <organismsDiffer>false</organismsDiffer>
    <experiments>3</experiments>
</comment>
<comment type="subcellular location">
    <subcellularLocation>
        <location evidence="3 7">Endoplasmic reticulum membrane</location>
        <topology evidence="1">Single-pass membrane protein</topology>
    </subcellularLocation>
    <subcellularLocation>
        <location evidence="5 8">Mitochondrion</location>
    </subcellularLocation>
</comment>
<comment type="miscellaneous">
    <text evidence="4">Present with 61800 molecules/cell in log phase SD medium.</text>
</comment>
<comment type="similarity">
    <text evidence="11">Belongs to the PHO88 family.</text>
</comment>
<sequence>MNPQVSNIIIMLVMMQLSRRIDMEDPTIIMYIRILYCSSIGISWIIYQMARKRIVAKNDMTTMKYVEPGNAMSGEGEKLQVTTVRDYDLKEIDSAIKSIYTGMAMMGFMHLYLKYTNPLFMQSISPVKSALEHNEVKIHLFGKPATGDLKRPFKAPSLFGGMGQTGPKTDKKSIEEAERAGNAGVKAE</sequence>
<protein>
    <recommendedName>
        <fullName evidence="9">SRP-independent targeting protein 3</fullName>
    </recommendedName>
    <alternativeName>
        <fullName evidence="12">Inorganic phosphate transport protein PHO88</fullName>
    </alternativeName>
    <alternativeName>
        <fullName>Phosphate metabolism protein PHO88</fullName>
    </alternativeName>
</protein>
<name>PHO88_YEAST</name>
<accession>P38264</accession>
<accession>D6VQA5</accession>
<feature type="chain" id="PRO_0000058405" description="SRP-independent targeting protein 3">
    <location>
        <begin position="1"/>
        <end position="188"/>
    </location>
</feature>
<feature type="transmembrane region" description="Helical" evidence="1">
    <location>
        <begin position="27"/>
        <end position="47"/>
    </location>
</feature>
<feature type="region of interest" description="Disordered" evidence="2">
    <location>
        <begin position="157"/>
        <end position="188"/>
    </location>
</feature>
<feature type="compositionally biased region" description="Basic and acidic residues" evidence="2">
    <location>
        <begin position="168"/>
        <end position="179"/>
    </location>
</feature>
<feature type="modified residue" description="Phosphoserine" evidence="14">
    <location>
        <position position="157"/>
    </location>
</feature>
<organism>
    <name type="scientific">Saccharomyces cerevisiae (strain ATCC 204508 / S288c)</name>
    <name type="common">Baker's yeast</name>
    <dbReference type="NCBI Taxonomy" id="559292"/>
    <lineage>
        <taxon>Eukaryota</taxon>
        <taxon>Fungi</taxon>
        <taxon>Dikarya</taxon>
        <taxon>Ascomycota</taxon>
        <taxon>Saccharomycotina</taxon>
        <taxon>Saccharomycetes</taxon>
        <taxon>Saccharomycetales</taxon>
        <taxon>Saccharomycetaceae</taxon>
        <taxon>Saccharomyces</taxon>
    </lineage>
</organism>